<reference key="1">
    <citation type="journal article" date="2005" name="Proc. Natl. Acad. Sci. U.S.A.">
        <title>The genome of Salinibacter ruber: convergence and gene exchange among hyperhalophilic bacteria and archaea.</title>
        <authorList>
            <person name="Mongodin E.F."/>
            <person name="Nelson K.E."/>
            <person name="Daugherty S."/>
            <person name="DeBoy R.T."/>
            <person name="Wister J."/>
            <person name="Khouri H."/>
            <person name="Weidman J."/>
            <person name="Walsh D.A."/>
            <person name="Papke R.T."/>
            <person name="Sanchez Perez G."/>
            <person name="Sharma A.K."/>
            <person name="Nesbo C.L."/>
            <person name="MacLeod D."/>
            <person name="Bapteste E."/>
            <person name="Doolittle W.F."/>
            <person name="Charlebois R.L."/>
            <person name="Legault B."/>
            <person name="Rodriguez-Valera F."/>
        </authorList>
    </citation>
    <scope>NUCLEOTIDE SEQUENCE [LARGE SCALE GENOMIC DNA]</scope>
    <source>
        <strain>DSM 13855 / CECT 5946 / M31</strain>
    </source>
</reference>
<dbReference type="EMBL" id="CP000159">
    <property type="protein sequence ID" value="ABC43682.1"/>
    <property type="status" value="ALT_INIT"/>
    <property type="molecule type" value="Genomic_DNA"/>
</dbReference>
<dbReference type="RefSeq" id="WP_237702044.1">
    <property type="nucleotide sequence ID" value="NC_007677.1"/>
</dbReference>
<dbReference type="RefSeq" id="YP_445544.1">
    <property type="nucleotide sequence ID" value="NC_007677.1"/>
</dbReference>
<dbReference type="SMR" id="Q2S2N7"/>
<dbReference type="STRING" id="309807.SRU_1420"/>
<dbReference type="EnsemblBacteria" id="ABC43682">
    <property type="protein sequence ID" value="ABC43682"/>
    <property type="gene ID" value="SRU_1420"/>
</dbReference>
<dbReference type="GeneID" id="83728330"/>
<dbReference type="KEGG" id="sru:SRU_1420"/>
<dbReference type="PATRIC" id="fig|309807.25.peg.1475"/>
<dbReference type="eggNOG" id="COG0261">
    <property type="taxonomic scope" value="Bacteria"/>
</dbReference>
<dbReference type="HOGENOM" id="CLU_061463_1_2_10"/>
<dbReference type="OrthoDB" id="9813334at2"/>
<dbReference type="Proteomes" id="UP000008674">
    <property type="component" value="Chromosome"/>
</dbReference>
<dbReference type="GO" id="GO:0005737">
    <property type="term" value="C:cytoplasm"/>
    <property type="evidence" value="ECO:0007669"/>
    <property type="project" value="UniProtKB-ARBA"/>
</dbReference>
<dbReference type="GO" id="GO:1990904">
    <property type="term" value="C:ribonucleoprotein complex"/>
    <property type="evidence" value="ECO:0007669"/>
    <property type="project" value="UniProtKB-KW"/>
</dbReference>
<dbReference type="GO" id="GO:0005840">
    <property type="term" value="C:ribosome"/>
    <property type="evidence" value="ECO:0007669"/>
    <property type="project" value="UniProtKB-KW"/>
</dbReference>
<dbReference type="GO" id="GO:0019843">
    <property type="term" value="F:rRNA binding"/>
    <property type="evidence" value="ECO:0007669"/>
    <property type="project" value="UniProtKB-UniRule"/>
</dbReference>
<dbReference type="GO" id="GO:0003735">
    <property type="term" value="F:structural constituent of ribosome"/>
    <property type="evidence" value="ECO:0007669"/>
    <property type="project" value="InterPro"/>
</dbReference>
<dbReference type="GO" id="GO:0006412">
    <property type="term" value="P:translation"/>
    <property type="evidence" value="ECO:0007669"/>
    <property type="project" value="UniProtKB-UniRule"/>
</dbReference>
<dbReference type="HAMAP" id="MF_01363">
    <property type="entry name" value="Ribosomal_bL21"/>
    <property type="match status" value="1"/>
</dbReference>
<dbReference type="InterPro" id="IPR028909">
    <property type="entry name" value="bL21-like"/>
</dbReference>
<dbReference type="InterPro" id="IPR036164">
    <property type="entry name" value="bL21-like_sf"/>
</dbReference>
<dbReference type="InterPro" id="IPR001787">
    <property type="entry name" value="Ribosomal_bL21"/>
</dbReference>
<dbReference type="InterPro" id="IPR018258">
    <property type="entry name" value="Ribosomal_bL21_CS"/>
</dbReference>
<dbReference type="NCBIfam" id="TIGR00061">
    <property type="entry name" value="L21"/>
    <property type="match status" value="1"/>
</dbReference>
<dbReference type="PANTHER" id="PTHR21349">
    <property type="entry name" value="50S RIBOSOMAL PROTEIN L21"/>
    <property type="match status" value="1"/>
</dbReference>
<dbReference type="PANTHER" id="PTHR21349:SF0">
    <property type="entry name" value="LARGE RIBOSOMAL SUBUNIT PROTEIN BL21M"/>
    <property type="match status" value="1"/>
</dbReference>
<dbReference type="Pfam" id="PF00829">
    <property type="entry name" value="Ribosomal_L21p"/>
    <property type="match status" value="1"/>
</dbReference>
<dbReference type="SUPFAM" id="SSF141091">
    <property type="entry name" value="L21p-like"/>
    <property type="match status" value="1"/>
</dbReference>
<dbReference type="PROSITE" id="PS01169">
    <property type="entry name" value="RIBOSOMAL_L21"/>
    <property type="match status" value="1"/>
</dbReference>
<evidence type="ECO:0000255" key="1">
    <source>
        <dbReference type="HAMAP-Rule" id="MF_01363"/>
    </source>
</evidence>
<evidence type="ECO:0000256" key="2">
    <source>
        <dbReference type="SAM" id="MobiDB-lite"/>
    </source>
</evidence>
<evidence type="ECO:0000305" key="3"/>
<accession>Q2S2N7</accession>
<protein>
    <recommendedName>
        <fullName evidence="1">Large ribosomal subunit protein bL21</fullName>
    </recommendedName>
    <alternativeName>
        <fullName evidence="3">50S ribosomal protein L21</fullName>
    </alternativeName>
</protein>
<organism>
    <name type="scientific">Salinibacter ruber (strain DSM 13855 / M31)</name>
    <dbReference type="NCBI Taxonomy" id="309807"/>
    <lineage>
        <taxon>Bacteria</taxon>
        <taxon>Pseudomonadati</taxon>
        <taxon>Rhodothermota</taxon>
        <taxon>Rhodothermia</taxon>
        <taxon>Rhodothermales</taxon>
        <taxon>Salinibacteraceae</taxon>
        <taxon>Salinibacter</taxon>
    </lineage>
</organism>
<name>RL21_SALRD</name>
<comment type="function">
    <text evidence="1">This protein binds to 23S rRNA in the presence of protein L20.</text>
</comment>
<comment type="subunit">
    <text evidence="1">Part of the 50S ribosomal subunit. Contacts protein L20.</text>
</comment>
<comment type="similarity">
    <text evidence="1">Belongs to the bacterial ribosomal protein bL21 family.</text>
</comment>
<comment type="sequence caution" evidence="3">
    <conflict type="erroneous initiation">
        <sequence resource="EMBL-CDS" id="ABC43682"/>
    </conflict>
</comment>
<proteinExistence type="inferred from homology"/>
<gene>
    <name evidence="1" type="primary">rplU</name>
    <name type="ordered locus">SRU_1420</name>
</gene>
<sequence length="135" mass="14933">MYAVVDVKDKQFKVQEGDTLYVPYHSDATAGQELTLDRVLLVSDGDGDVTLGTPTVEDATATARVLEHVKGDKVIVFKKKRRKRYRVKRGHRQQYTQIEIESLNANGPASSDDEEAAETSDAEPDEDPEAEPAEA</sequence>
<feature type="chain" id="PRO_0000270734" description="Large ribosomal subunit protein bL21">
    <location>
        <begin position="1"/>
        <end position="135"/>
    </location>
</feature>
<feature type="region of interest" description="Disordered" evidence="2">
    <location>
        <begin position="85"/>
        <end position="135"/>
    </location>
</feature>
<feature type="compositionally biased region" description="Polar residues" evidence="2">
    <location>
        <begin position="93"/>
        <end position="107"/>
    </location>
</feature>
<feature type="compositionally biased region" description="Acidic residues" evidence="2">
    <location>
        <begin position="111"/>
        <end position="135"/>
    </location>
</feature>
<keyword id="KW-1185">Reference proteome</keyword>
<keyword id="KW-0687">Ribonucleoprotein</keyword>
<keyword id="KW-0689">Ribosomal protein</keyword>
<keyword id="KW-0694">RNA-binding</keyword>
<keyword id="KW-0699">rRNA-binding</keyword>